<reference key="1">
    <citation type="submission" date="2006-11" db="EMBL/GenBank/DDBJ databases">
        <title>Sequence of Campylobacter fetus subsp. fetus 82-40.</title>
        <authorList>
            <person name="Fouts D.E."/>
            <person name="Nelson K.E."/>
        </authorList>
    </citation>
    <scope>NUCLEOTIDE SEQUENCE [LARGE SCALE GENOMIC DNA]</scope>
    <source>
        <strain>82-40</strain>
    </source>
</reference>
<feature type="chain" id="PRO_1000062598" description="Acetyl-coenzyme A carboxylase carboxyl transferase subunit alpha">
    <location>
        <begin position="1"/>
        <end position="310"/>
    </location>
</feature>
<feature type="domain" description="CoA carboxyltransferase C-terminal" evidence="2">
    <location>
        <begin position="36"/>
        <end position="286"/>
    </location>
</feature>
<organism>
    <name type="scientific">Campylobacter fetus subsp. fetus (strain 82-40)</name>
    <dbReference type="NCBI Taxonomy" id="360106"/>
    <lineage>
        <taxon>Bacteria</taxon>
        <taxon>Pseudomonadati</taxon>
        <taxon>Campylobacterota</taxon>
        <taxon>Epsilonproteobacteria</taxon>
        <taxon>Campylobacterales</taxon>
        <taxon>Campylobacteraceae</taxon>
        <taxon>Campylobacter</taxon>
    </lineage>
</organism>
<sequence length="310" mass="34580">MASYLDFEKGIKQIDDDIANAKIRGDEHAVEILRKNLEKEITKTYKNLNEFQRLNLARHPDRPYALDYIRALLKDGYEIHGDRAFRDDPSIVCYIGYIGGKRVIVIAEQKGRGTKYKIMRNFGMPHPEGYRKALRIARLAEKFEIPIIFLIDTPGAYPGVGAEERGQSEAIARNLFEFSELKTRTIAVVIGEGGSGGALAIGVADRLAMMKNSVFSVISPEGCAAILWNDPSKNEAATKAMKITADDLKELQLIDDVIDEPVMGAHRDKEGAIKALGEYILKQLDELEKKDINDVVKNRIEKILSVGAYA</sequence>
<comment type="function">
    <text evidence="1">Component of the acetyl coenzyme A carboxylase (ACC) complex. First, biotin carboxylase catalyzes the carboxylation of biotin on its carrier protein (BCCP) and then the CO(2) group is transferred by the carboxyltransferase to acetyl-CoA to form malonyl-CoA.</text>
</comment>
<comment type="catalytic activity">
    <reaction evidence="1">
        <text>N(6)-carboxybiotinyl-L-lysyl-[protein] + acetyl-CoA = N(6)-biotinyl-L-lysyl-[protein] + malonyl-CoA</text>
        <dbReference type="Rhea" id="RHEA:54728"/>
        <dbReference type="Rhea" id="RHEA-COMP:10505"/>
        <dbReference type="Rhea" id="RHEA-COMP:10506"/>
        <dbReference type="ChEBI" id="CHEBI:57288"/>
        <dbReference type="ChEBI" id="CHEBI:57384"/>
        <dbReference type="ChEBI" id="CHEBI:83144"/>
        <dbReference type="ChEBI" id="CHEBI:83145"/>
        <dbReference type="EC" id="2.1.3.15"/>
    </reaction>
</comment>
<comment type="pathway">
    <text evidence="1">Lipid metabolism; malonyl-CoA biosynthesis; malonyl-CoA from acetyl-CoA: step 1/1.</text>
</comment>
<comment type="subunit">
    <text evidence="1">Acetyl-CoA carboxylase is a heterohexamer composed of biotin carboxyl carrier protein (AccB), biotin carboxylase (AccC) and two subunits each of ACCase subunit alpha (AccA) and ACCase subunit beta (AccD).</text>
</comment>
<comment type="subcellular location">
    <subcellularLocation>
        <location evidence="1">Cytoplasm</location>
    </subcellularLocation>
</comment>
<comment type="similarity">
    <text evidence="1">Belongs to the AccA family.</text>
</comment>
<keyword id="KW-0067">ATP-binding</keyword>
<keyword id="KW-0963">Cytoplasm</keyword>
<keyword id="KW-0275">Fatty acid biosynthesis</keyword>
<keyword id="KW-0276">Fatty acid metabolism</keyword>
<keyword id="KW-0444">Lipid biosynthesis</keyword>
<keyword id="KW-0443">Lipid metabolism</keyword>
<keyword id="KW-0547">Nucleotide-binding</keyword>
<keyword id="KW-0808">Transferase</keyword>
<gene>
    <name evidence="1" type="primary">accA</name>
    <name type="ordered locus">CFF8240_1364</name>
</gene>
<proteinExistence type="inferred from homology"/>
<accession>A0RQM4</accession>
<name>ACCA_CAMFF</name>
<protein>
    <recommendedName>
        <fullName evidence="1">Acetyl-coenzyme A carboxylase carboxyl transferase subunit alpha</fullName>
        <shortName evidence="1">ACCase subunit alpha</shortName>
        <shortName evidence="1">Acetyl-CoA carboxylase carboxyltransferase subunit alpha</shortName>
        <ecNumber evidence="1">2.1.3.15</ecNumber>
    </recommendedName>
</protein>
<dbReference type="EC" id="2.1.3.15" evidence="1"/>
<dbReference type="EMBL" id="CP000487">
    <property type="protein sequence ID" value="ABK83368.1"/>
    <property type="molecule type" value="Genomic_DNA"/>
</dbReference>
<dbReference type="RefSeq" id="WP_011732172.1">
    <property type="nucleotide sequence ID" value="NC_008599.1"/>
</dbReference>
<dbReference type="SMR" id="A0RQM4"/>
<dbReference type="GeneID" id="61065181"/>
<dbReference type="KEGG" id="cff:CFF8240_1364"/>
<dbReference type="eggNOG" id="COG0825">
    <property type="taxonomic scope" value="Bacteria"/>
</dbReference>
<dbReference type="HOGENOM" id="CLU_015486_0_2_7"/>
<dbReference type="UniPathway" id="UPA00655">
    <property type="reaction ID" value="UER00711"/>
</dbReference>
<dbReference type="Proteomes" id="UP000000760">
    <property type="component" value="Chromosome"/>
</dbReference>
<dbReference type="GO" id="GO:0009317">
    <property type="term" value="C:acetyl-CoA carboxylase complex"/>
    <property type="evidence" value="ECO:0007669"/>
    <property type="project" value="InterPro"/>
</dbReference>
<dbReference type="GO" id="GO:0003989">
    <property type="term" value="F:acetyl-CoA carboxylase activity"/>
    <property type="evidence" value="ECO:0007669"/>
    <property type="project" value="InterPro"/>
</dbReference>
<dbReference type="GO" id="GO:0005524">
    <property type="term" value="F:ATP binding"/>
    <property type="evidence" value="ECO:0007669"/>
    <property type="project" value="UniProtKB-KW"/>
</dbReference>
<dbReference type="GO" id="GO:0016743">
    <property type="term" value="F:carboxyl- or carbamoyltransferase activity"/>
    <property type="evidence" value="ECO:0007669"/>
    <property type="project" value="UniProtKB-UniRule"/>
</dbReference>
<dbReference type="GO" id="GO:0006633">
    <property type="term" value="P:fatty acid biosynthetic process"/>
    <property type="evidence" value="ECO:0007669"/>
    <property type="project" value="UniProtKB-KW"/>
</dbReference>
<dbReference type="GO" id="GO:2001295">
    <property type="term" value="P:malonyl-CoA biosynthetic process"/>
    <property type="evidence" value="ECO:0007669"/>
    <property type="project" value="UniProtKB-UniRule"/>
</dbReference>
<dbReference type="Gene3D" id="3.90.226.10">
    <property type="entry name" value="2-enoyl-CoA Hydratase, Chain A, domain 1"/>
    <property type="match status" value="1"/>
</dbReference>
<dbReference type="HAMAP" id="MF_00823">
    <property type="entry name" value="AcetylCoA_CT_alpha"/>
    <property type="match status" value="1"/>
</dbReference>
<dbReference type="InterPro" id="IPR001095">
    <property type="entry name" value="Acetyl_CoA_COase_a_su"/>
</dbReference>
<dbReference type="InterPro" id="IPR029045">
    <property type="entry name" value="ClpP/crotonase-like_dom_sf"/>
</dbReference>
<dbReference type="InterPro" id="IPR011763">
    <property type="entry name" value="COA_CT_C"/>
</dbReference>
<dbReference type="NCBIfam" id="TIGR00513">
    <property type="entry name" value="accA"/>
    <property type="match status" value="1"/>
</dbReference>
<dbReference type="NCBIfam" id="NF041504">
    <property type="entry name" value="AccA_sub"/>
    <property type="match status" value="1"/>
</dbReference>
<dbReference type="NCBIfam" id="NF004344">
    <property type="entry name" value="PRK05724.1"/>
    <property type="match status" value="1"/>
</dbReference>
<dbReference type="PANTHER" id="PTHR42853">
    <property type="entry name" value="ACETYL-COENZYME A CARBOXYLASE CARBOXYL TRANSFERASE SUBUNIT ALPHA"/>
    <property type="match status" value="1"/>
</dbReference>
<dbReference type="PANTHER" id="PTHR42853:SF3">
    <property type="entry name" value="ACETYL-COENZYME A CARBOXYLASE CARBOXYL TRANSFERASE SUBUNIT ALPHA, CHLOROPLASTIC"/>
    <property type="match status" value="1"/>
</dbReference>
<dbReference type="Pfam" id="PF03255">
    <property type="entry name" value="ACCA"/>
    <property type="match status" value="1"/>
</dbReference>
<dbReference type="PRINTS" id="PR01069">
    <property type="entry name" value="ACCCTRFRASEA"/>
</dbReference>
<dbReference type="SUPFAM" id="SSF52096">
    <property type="entry name" value="ClpP/crotonase"/>
    <property type="match status" value="1"/>
</dbReference>
<dbReference type="PROSITE" id="PS50989">
    <property type="entry name" value="COA_CT_CTER"/>
    <property type="match status" value="1"/>
</dbReference>
<evidence type="ECO:0000255" key="1">
    <source>
        <dbReference type="HAMAP-Rule" id="MF_00823"/>
    </source>
</evidence>
<evidence type="ECO:0000255" key="2">
    <source>
        <dbReference type="PROSITE-ProRule" id="PRU01137"/>
    </source>
</evidence>